<name>ABCG2_RAT</name>
<dbReference type="EC" id="7.6.2.2" evidence="2"/>
<dbReference type="EMBL" id="AB094089">
    <property type="protein sequence ID" value="BAC75666.1"/>
    <property type="molecule type" value="mRNA"/>
</dbReference>
<dbReference type="EMBL" id="AB105817">
    <property type="protein sequence ID" value="BAC76396.1"/>
    <property type="molecule type" value="mRNA"/>
</dbReference>
<dbReference type="EMBL" id="AY089996">
    <property type="protein sequence ID" value="AAM09106.1"/>
    <property type="molecule type" value="mRNA"/>
</dbReference>
<dbReference type="EMBL" id="AY089997">
    <property type="protein sequence ID" value="AAM09107.1"/>
    <property type="molecule type" value="mRNA"/>
</dbReference>
<dbReference type="EMBL" id="AY089998">
    <property type="protein sequence ID" value="AAM09108.1"/>
    <property type="molecule type" value="mRNA"/>
</dbReference>
<dbReference type="EMBL" id="AY274118">
    <property type="protein sequence ID" value="AAP23237.1"/>
    <property type="molecule type" value="mRNA"/>
</dbReference>
<dbReference type="RefSeq" id="NP_852046.1">
    <property type="nucleotide sequence ID" value="NM_181381.2"/>
</dbReference>
<dbReference type="RefSeq" id="XP_006236634.1">
    <property type="nucleotide sequence ID" value="XM_006236572.3"/>
</dbReference>
<dbReference type="RefSeq" id="XP_006236635.1">
    <property type="nucleotide sequence ID" value="XM_006236573.5"/>
</dbReference>
<dbReference type="RefSeq" id="XP_006236636.1">
    <property type="nucleotide sequence ID" value="XM_006236574.3"/>
</dbReference>
<dbReference type="RefSeq" id="XP_006236638.1">
    <property type="nucleotide sequence ID" value="XM_006236576.4"/>
</dbReference>
<dbReference type="RefSeq" id="XP_008761183.1">
    <property type="nucleotide sequence ID" value="XM_008762961.2"/>
</dbReference>
<dbReference type="RefSeq" id="XP_017448109.1">
    <property type="nucleotide sequence ID" value="XM_017592620.3"/>
</dbReference>
<dbReference type="RefSeq" id="XP_038963490.1">
    <property type="nucleotide sequence ID" value="XM_039107562.2"/>
</dbReference>
<dbReference type="RefSeq" id="XP_063142112.1">
    <property type="nucleotide sequence ID" value="XM_063286042.1"/>
</dbReference>
<dbReference type="SMR" id="Q80W57"/>
<dbReference type="FunCoup" id="Q80W57">
    <property type="interactions" value="80"/>
</dbReference>
<dbReference type="STRING" id="10116.ENSRNOP00000075138"/>
<dbReference type="ChEMBL" id="CHEMBL3509585"/>
<dbReference type="GlyCosmos" id="Q80W57">
    <property type="glycosylation" value="2 sites, No reported glycans"/>
</dbReference>
<dbReference type="GlyGen" id="Q80W57">
    <property type="glycosylation" value="2 sites"/>
</dbReference>
<dbReference type="iPTMnet" id="Q80W57"/>
<dbReference type="PhosphoSitePlus" id="Q80W57"/>
<dbReference type="PaxDb" id="10116-ENSRNOP00000009546"/>
<dbReference type="Ensembl" id="ENSRNOT00000009546.6">
    <property type="protein sequence ID" value="ENSRNOP00000009546.4"/>
    <property type="gene ID" value="ENSRNOG00000007041.7"/>
</dbReference>
<dbReference type="GeneID" id="312382"/>
<dbReference type="KEGG" id="rno:312382"/>
<dbReference type="UCSC" id="RGD:631345">
    <property type="organism name" value="rat"/>
</dbReference>
<dbReference type="AGR" id="RGD:631345"/>
<dbReference type="CTD" id="9429"/>
<dbReference type="RGD" id="631345">
    <property type="gene designation" value="Abcg2"/>
</dbReference>
<dbReference type="eggNOG" id="KOG0061">
    <property type="taxonomic scope" value="Eukaryota"/>
</dbReference>
<dbReference type="GeneTree" id="ENSGT00940000160729"/>
<dbReference type="InParanoid" id="Q80W57"/>
<dbReference type="OMA" id="MCVNGFM"/>
<dbReference type="OrthoDB" id="66620at2759"/>
<dbReference type="PhylomeDB" id="Q80W57"/>
<dbReference type="TreeFam" id="TF105211"/>
<dbReference type="BRENDA" id="7.6.2.3">
    <property type="organism ID" value="5301"/>
</dbReference>
<dbReference type="Reactome" id="R-RNO-1660661">
    <property type="pathway name" value="Sphingolipid de novo biosynthesis"/>
</dbReference>
<dbReference type="Reactome" id="R-RNO-189451">
    <property type="pathway name" value="Heme biosynthesis"/>
</dbReference>
<dbReference type="Reactome" id="R-RNO-189483">
    <property type="pathway name" value="Heme degradation"/>
</dbReference>
<dbReference type="Reactome" id="R-RNO-917937">
    <property type="pathway name" value="Iron uptake and transport"/>
</dbReference>
<dbReference type="Reactome" id="R-RNO-9753281">
    <property type="pathway name" value="Paracetamol ADME"/>
</dbReference>
<dbReference type="Reactome" id="R-RNO-9793528">
    <property type="pathway name" value="Ciprofloxacin ADME"/>
</dbReference>
<dbReference type="PRO" id="PR:Q80W57"/>
<dbReference type="Proteomes" id="UP000002494">
    <property type="component" value="Chromosome 4"/>
</dbReference>
<dbReference type="Bgee" id="ENSRNOG00000007041">
    <property type="expression patterns" value="Expressed in duodenum and 18 other cell types or tissues"/>
</dbReference>
<dbReference type="GO" id="GO:0016324">
    <property type="term" value="C:apical plasma membrane"/>
    <property type="evidence" value="ECO:0000314"/>
    <property type="project" value="ARUK-UCL"/>
</dbReference>
<dbReference type="GO" id="GO:0031526">
    <property type="term" value="C:brush border membrane"/>
    <property type="evidence" value="ECO:0000250"/>
    <property type="project" value="UniProtKB"/>
</dbReference>
<dbReference type="GO" id="GO:0098591">
    <property type="term" value="C:external side of apical plasma membrane"/>
    <property type="evidence" value="ECO:0000314"/>
    <property type="project" value="ARUK-UCL"/>
</dbReference>
<dbReference type="GO" id="GO:0045121">
    <property type="term" value="C:membrane raft"/>
    <property type="evidence" value="ECO:0000250"/>
    <property type="project" value="UniProtKB"/>
</dbReference>
<dbReference type="GO" id="GO:0031966">
    <property type="term" value="C:mitochondrial membrane"/>
    <property type="evidence" value="ECO:0007669"/>
    <property type="project" value="UniProtKB-SubCell"/>
</dbReference>
<dbReference type="GO" id="GO:0005886">
    <property type="term" value="C:plasma membrane"/>
    <property type="evidence" value="ECO:0000266"/>
    <property type="project" value="RGD"/>
</dbReference>
<dbReference type="GO" id="GO:0008559">
    <property type="term" value="F:ABC-type xenobiotic transporter activity"/>
    <property type="evidence" value="ECO:0000266"/>
    <property type="project" value="RGD"/>
</dbReference>
<dbReference type="GO" id="GO:0042887">
    <property type="term" value="F:amide transmembrane transporter activity"/>
    <property type="evidence" value="ECO:0000314"/>
    <property type="project" value="RGD"/>
</dbReference>
<dbReference type="GO" id="GO:0005524">
    <property type="term" value="F:ATP binding"/>
    <property type="evidence" value="ECO:0007669"/>
    <property type="project" value="UniProtKB-KW"/>
</dbReference>
<dbReference type="GO" id="GO:0016887">
    <property type="term" value="F:ATP hydrolysis activity"/>
    <property type="evidence" value="ECO:0007669"/>
    <property type="project" value="InterPro"/>
</dbReference>
<dbReference type="GO" id="GO:0042626">
    <property type="term" value="F:ATPase-coupled transmembrane transporter activity"/>
    <property type="evidence" value="ECO:0000250"/>
    <property type="project" value="UniProtKB"/>
</dbReference>
<dbReference type="GO" id="GO:0015225">
    <property type="term" value="F:biotin transmembrane transporter activity"/>
    <property type="evidence" value="ECO:0000250"/>
    <property type="project" value="UniProtKB"/>
</dbReference>
<dbReference type="GO" id="GO:0008092">
    <property type="term" value="F:cytoskeletal protein binding"/>
    <property type="evidence" value="ECO:0000353"/>
    <property type="project" value="RGD"/>
</dbReference>
<dbReference type="GO" id="GO:0015562">
    <property type="term" value="F:efflux transmembrane transporter activity"/>
    <property type="evidence" value="ECO:0000314"/>
    <property type="project" value="ARUK-UCL"/>
</dbReference>
<dbReference type="GO" id="GO:0042802">
    <property type="term" value="F:identical protein binding"/>
    <property type="evidence" value="ECO:0000266"/>
    <property type="project" value="RGD"/>
</dbReference>
<dbReference type="GO" id="GO:0008514">
    <property type="term" value="F:organic anion transmembrane transporter activity"/>
    <property type="evidence" value="ECO:0000314"/>
    <property type="project" value="ARUK-UCL"/>
</dbReference>
<dbReference type="GO" id="GO:0042803">
    <property type="term" value="F:protein homodimerization activity"/>
    <property type="evidence" value="ECO:0000266"/>
    <property type="project" value="RGD"/>
</dbReference>
<dbReference type="GO" id="GO:0032217">
    <property type="term" value="F:riboflavin transmembrane transporter activity"/>
    <property type="evidence" value="ECO:0000250"/>
    <property type="project" value="UniProtKB"/>
</dbReference>
<dbReference type="GO" id="GO:0015143">
    <property type="term" value="F:urate transmembrane transporter activity"/>
    <property type="evidence" value="ECO:0000250"/>
    <property type="project" value="UniProtKB"/>
</dbReference>
<dbReference type="GO" id="GO:0042910">
    <property type="term" value="F:xenobiotic transmembrane transporter activity"/>
    <property type="evidence" value="ECO:0000314"/>
    <property type="project" value="ARUK-UCL"/>
</dbReference>
<dbReference type="GO" id="GO:0015878">
    <property type="term" value="P:biotin transport"/>
    <property type="evidence" value="ECO:0000250"/>
    <property type="project" value="UniProtKB"/>
</dbReference>
<dbReference type="GO" id="GO:1990748">
    <property type="term" value="P:cellular detoxification"/>
    <property type="evidence" value="ECO:0000266"/>
    <property type="project" value="RGD"/>
</dbReference>
<dbReference type="GO" id="GO:0071549">
    <property type="term" value="P:cellular response to dexamethasone stimulus"/>
    <property type="evidence" value="ECO:0000270"/>
    <property type="project" value="RGD"/>
</dbReference>
<dbReference type="GO" id="GO:0071392">
    <property type="term" value="P:cellular response to estradiol stimulus"/>
    <property type="evidence" value="ECO:0000270"/>
    <property type="project" value="RGD"/>
</dbReference>
<dbReference type="GO" id="GO:0060136">
    <property type="term" value="P:embryonic process involved in female pregnancy"/>
    <property type="evidence" value="ECO:0000314"/>
    <property type="project" value="RGD"/>
</dbReference>
<dbReference type="GO" id="GO:0140115">
    <property type="term" value="P:export across plasma membrane"/>
    <property type="evidence" value="ECO:0000314"/>
    <property type="project" value="ARUK-UCL"/>
</dbReference>
<dbReference type="GO" id="GO:0006869">
    <property type="term" value="P:lipid transport"/>
    <property type="evidence" value="ECO:0007669"/>
    <property type="project" value="UniProtKB-KW"/>
</dbReference>
<dbReference type="GO" id="GO:1904479">
    <property type="term" value="P:negative regulation of intestinal absorption"/>
    <property type="evidence" value="ECO:0000315"/>
    <property type="project" value="RGD"/>
</dbReference>
<dbReference type="GO" id="GO:0015711">
    <property type="term" value="P:organic anion transport"/>
    <property type="evidence" value="ECO:0000314"/>
    <property type="project" value="ARUK-UCL"/>
</dbReference>
<dbReference type="GO" id="GO:0065003">
    <property type="term" value="P:protein-containing complex assembly"/>
    <property type="evidence" value="ECO:0000314"/>
    <property type="project" value="RGD"/>
</dbReference>
<dbReference type="GO" id="GO:0097744">
    <property type="term" value="P:renal urate salt excretion"/>
    <property type="evidence" value="ECO:0000270"/>
    <property type="project" value="RGD"/>
</dbReference>
<dbReference type="GO" id="GO:1904612">
    <property type="term" value="P:response to 2,3,7,8-tetrachlorodibenzodioxine"/>
    <property type="evidence" value="ECO:0000270"/>
    <property type="project" value="RGD"/>
</dbReference>
<dbReference type="GO" id="GO:0097305">
    <property type="term" value="P:response to alcohol"/>
    <property type="evidence" value="ECO:0000270"/>
    <property type="project" value="RGD"/>
</dbReference>
<dbReference type="GO" id="GO:0051593">
    <property type="term" value="P:response to folic acid"/>
    <property type="evidence" value="ECO:0000270"/>
    <property type="project" value="RGD"/>
</dbReference>
<dbReference type="GO" id="GO:0032868">
    <property type="term" value="P:response to insulin"/>
    <property type="evidence" value="ECO:0000270"/>
    <property type="project" value="RGD"/>
</dbReference>
<dbReference type="GO" id="GO:0010039">
    <property type="term" value="P:response to iron ion"/>
    <property type="evidence" value="ECO:0000270"/>
    <property type="project" value="RGD"/>
</dbReference>
<dbReference type="GO" id="GO:0032496">
    <property type="term" value="P:response to lipopolysaccharide"/>
    <property type="evidence" value="ECO:0000270"/>
    <property type="project" value="RGD"/>
</dbReference>
<dbReference type="GO" id="GO:0032218">
    <property type="term" value="P:riboflavin transport"/>
    <property type="evidence" value="ECO:0000250"/>
    <property type="project" value="UniProtKB"/>
</dbReference>
<dbReference type="GO" id="GO:0070633">
    <property type="term" value="P:transepithelial transport"/>
    <property type="evidence" value="ECO:0000266"/>
    <property type="project" value="RGD"/>
</dbReference>
<dbReference type="GO" id="GO:0055085">
    <property type="term" value="P:transmembrane transport"/>
    <property type="evidence" value="ECO:0000315"/>
    <property type="project" value="RGD"/>
</dbReference>
<dbReference type="GO" id="GO:0046415">
    <property type="term" value="P:urate metabolic process"/>
    <property type="evidence" value="ECO:0000266"/>
    <property type="project" value="RGD"/>
</dbReference>
<dbReference type="GO" id="GO:0015747">
    <property type="term" value="P:urate transport"/>
    <property type="evidence" value="ECO:0000315"/>
    <property type="project" value="RGD"/>
</dbReference>
<dbReference type="GO" id="GO:1990961">
    <property type="term" value="P:xenobiotic detoxification by transmembrane export across the plasma membrane"/>
    <property type="evidence" value="ECO:0000314"/>
    <property type="project" value="RGD"/>
</dbReference>
<dbReference type="GO" id="GO:1990962">
    <property type="term" value="P:xenobiotic transport across blood-brain barrier"/>
    <property type="evidence" value="ECO:0000266"/>
    <property type="project" value="RGD"/>
</dbReference>
<dbReference type="CDD" id="cd03213">
    <property type="entry name" value="ABCG_EPDR"/>
    <property type="match status" value="1"/>
</dbReference>
<dbReference type="FunFam" id="3.40.50.300:FF:000622">
    <property type="entry name" value="ATP-binding cassette sub-family G member 2"/>
    <property type="match status" value="1"/>
</dbReference>
<dbReference type="Gene3D" id="3.40.50.300">
    <property type="entry name" value="P-loop containing nucleotide triphosphate hydrolases"/>
    <property type="match status" value="1"/>
</dbReference>
<dbReference type="InterPro" id="IPR003593">
    <property type="entry name" value="AAA+_ATPase"/>
</dbReference>
<dbReference type="InterPro" id="IPR013525">
    <property type="entry name" value="ABC2_TM"/>
</dbReference>
<dbReference type="InterPro" id="IPR003439">
    <property type="entry name" value="ABC_transporter-like_ATP-bd"/>
</dbReference>
<dbReference type="InterPro" id="IPR043926">
    <property type="entry name" value="ABCG_dom"/>
</dbReference>
<dbReference type="InterPro" id="IPR050352">
    <property type="entry name" value="ABCG_transporters"/>
</dbReference>
<dbReference type="InterPro" id="IPR027417">
    <property type="entry name" value="P-loop_NTPase"/>
</dbReference>
<dbReference type="PANTHER" id="PTHR48041">
    <property type="entry name" value="ABC TRANSPORTER G FAMILY MEMBER 28"/>
    <property type="match status" value="1"/>
</dbReference>
<dbReference type="PANTHER" id="PTHR48041:SF92">
    <property type="entry name" value="BROAD SUBSTRATE SPECIFICITY ATP-BINDING CASSETTE TRANSPORTER ABCG2"/>
    <property type="match status" value="1"/>
</dbReference>
<dbReference type="Pfam" id="PF01061">
    <property type="entry name" value="ABC2_membrane"/>
    <property type="match status" value="1"/>
</dbReference>
<dbReference type="Pfam" id="PF19055">
    <property type="entry name" value="ABC2_membrane_7"/>
    <property type="match status" value="1"/>
</dbReference>
<dbReference type="Pfam" id="PF00005">
    <property type="entry name" value="ABC_tran"/>
    <property type="match status" value="1"/>
</dbReference>
<dbReference type="SMART" id="SM00382">
    <property type="entry name" value="AAA"/>
    <property type="match status" value="1"/>
</dbReference>
<dbReference type="SUPFAM" id="SSF52540">
    <property type="entry name" value="P-loop containing nucleoside triphosphate hydrolases"/>
    <property type="match status" value="1"/>
</dbReference>
<dbReference type="PROSITE" id="PS50893">
    <property type="entry name" value="ABC_TRANSPORTER_2"/>
    <property type="match status" value="1"/>
</dbReference>
<reference key="1">
    <citation type="journal article" date="2003" name="Am. J. Pathol.">
        <title>Hepatic oval cells have the side population phenotype defined by expression of ATP-binding cassette transporter ABCG2/BCRP1.</title>
        <authorList>
            <person name="Shimano K."/>
            <person name="Satake M."/>
            <person name="Okaya A."/>
            <person name="Kitanaka J."/>
            <person name="Kitanaka N."/>
            <person name="Takemura M."/>
            <person name="Sakagami M."/>
            <person name="Terada N."/>
            <person name="Tsujimura T."/>
        </authorList>
    </citation>
    <scope>NUCLEOTIDE SEQUENCE [MRNA]</scope>
</reference>
<reference key="2">
    <citation type="journal article" date="2004" name="J. Neurochem.">
        <title>Functional expression of rat ABCG2 on the luminal side of brain capillaries and its enhancement by astrocyte-derived soluble factor(s).</title>
        <authorList>
            <person name="Hori S."/>
            <person name="Ohtsuki S."/>
            <person name="Tachikawa M."/>
            <person name="Kimura N."/>
            <person name="Kondo T."/>
            <person name="Watanabe M."/>
            <person name="Nakashima E."/>
            <person name="Terasaki T."/>
        </authorList>
    </citation>
    <scope>NUCLEOTIDE SEQUENCE [MRNA]</scope>
    <scope>GLYCOSYLATION</scope>
    <scope>SUBCELLULAR LOCATION</scope>
    <scope>TISSUE SPECIFICITY</scope>
    <source>
        <strain>Wistar</strain>
        <tissue>Brain capillary</tissue>
    </source>
</reference>
<reference key="3">
    <citation type="submission" date="2002-03" db="EMBL/GenBank/DDBJ databases">
        <authorList>
            <person name="Yabuuchi H."/>
            <person name="Ishikawa T."/>
        </authorList>
    </citation>
    <scope>NUCLEOTIDE SEQUENCE [MRNA]</scope>
    <source>
        <strain>Sprague-Dawley</strain>
        <tissue>Liver</tissue>
    </source>
</reference>
<reference key="4">
    <citation type="submission" date="2003-04" db="EMBL/GenBank/DDBJ databases">
        <authorList>
            <person name="Zhang W."/>
            <person name="Stanimirovic D.B."/>
        </authorList>
    </citation>
    <scope>NUCLEOTIDE SEQUENCE [MRNA] OF 506-657</scope>
    <source>
        <strain>Sprague-Dawley</strain>
        <tissue>Brain endothelium</tissue>
    </source>
</reference>
<reference key="5">
    <citation type="journal article" date="2008" name="Biol. Pharm. Bull.">
        <title>Post-transcriptional regulation of breast cancer resistance protein after intestinal ischemia-reperfusion.</title>
        <authorList>
            <person name="Ogura J."/>
            <person name="Kobayashi M."/>
            <person name="Itagaki S."/>
            <person name="Hirano T."/>
            <person name="Iseki K."/>
        </authorList>
    </citation>
    <scope>SUBCELLULAR LOCATION</scope>
    <scope>TISSUE SPECIFICITY</scope>
    <scope>INDUCTION</scope>
</reference>
<reference key="6">
    <citation type="journal article" date="2012" name="Nat. Commun.">
        <title>Quantitative maps of protein phosphorylation sites across 14 different rat organs and tissues.</title>
        <authorList>
            <person name="Lundby A."/>
            <person name="Secher A."/>
            <person name="Lage K."/>
            <person name="Nordsborg N.B."/>
            <person name="Dmytriyev A."/>
            <person name="Lundby C."/>
            <person name="Olsen J.V."/>
        </authorList>
    </citation>
    <scope>IDENTIFICATION BY MASS SPECTROMETRY [LARGE SCALE ANALYSIS]</scope>
</reference>
<evidence type="ECO:0000250" key="1">
    <source>
        <dbReference type="UniProtKB" id="Q7TMS5"/>
    </source>
</evidence>
<evidence type="ECO:0000250" key="2">
    <source>
        <dbReference type="UniProtKB" id="Q9UNQ0"/>
    </source>
</evidence>
<evidence type="ECO:0000255" key="3"/>
<evidence type="ECO:0000255" key="4">
    <source>
        <dbReference type="PROSITE-ProRule" id="PRU00434"/>
    </source>
</evidence>
<evidence type="ECO:0000256" key="5">
    <source>
        <dbReference type="SAM" id="MobiDB-lite"/>
    </source>
</evidence>
<evidence type="ECO:0000269" key="6">
    <source>
    </source>
</evidence>
<evidence type="ECO:0000269" key="7">
    <source>
    </source>
</evidence>
<evidence type="ECO:0000305" key="8"/>
<keyword id="KW-0067">ATP-binding</keyword>
<keyword id="KW-1003">Cell membrane</keyword>
<keyword id="KW-1015">Disulfide bond</keyword>
<keyword id="KW-0325">Glycoprotein</keyword>
<keyword id="KW-0445">Lipid transport</keyword>
<keyword id="KW-0472">Membrane</keyword>
<keyword id="KW-0496">Mitochondrion</keyword>
<keyword id="KW-0547">Nucleotide-binding</keyword>
<keyword id="KW-0597">Phosphoprotein</keyword>
<keyword id="KW-1185">Reference proteome</keyword>
<keyword id="KW-1278">Translocase</keyword>
<keyword id="KW-0812">Transmembrane</keyword>
<keyword id="KW-1133">Transmembrane helix</keyword>
<keyword id="KW-0813">Transport</keyword>
<accession>Q80W57</accession>
<accession>Q80ST1</accession>
<accession>Q80UR3</accession>
<accession>Q80XF3</accession>
<organism>
    <name type="scientific">Rattus norvegicus</name>
    <name type="common">Rat</name>
    <dbReference type="NCBI Taxonomy" id="10116"/>
    <lineage>
        <taxon>Eukaryota</taxon>
        <taxon>Metazoa</taxon>
        <taxon>Chordata</taxon>
        <taxon>Craniata</taxon>
        <taxon>Vertebrata</taxon>
        <taxon>Euteleostomi</taxon>
        <taxon>Mammalia</taxon>
        <taxon>Eutheria</taxon>
        <taxon>Euarchontoglires</taxon>
        <taxon>Glires</taxon>
        <taxon>Rodentia</taxon>
        <taxon>Myomorpha</taxon>
        <taxon>Muroidea</taxon>
        <taxon>Muridae</taxon>
        <taxon>Murinae</taxon>
        <taxon>Rattus</taxon>
    </lineage>
</organism>
<protein>
    <recommendedName>
        <fullName evidence="8">Broad substrate specificity ATP-binding cassette transporter ABCG2</fullName>
        <ecNumber evidence="2">7.6.2.2</ecNumber>
    </recommendedName>
    <alternativeName>
        <fullName>ATP-binding cassette sub-family G member 2</fullName>
    </alternativeName>
    <alternativeName>
        <fullName>Breast cancer resistance protein 1 homolog</fullName>
    </alternativeName>
    <alternativeName>
        <fullName>Urate exporter</fullName>
    </alternativeName>
    <cdAntigenName>CD338</cdAntigenName>
</protein>
<comment type="function">
    <text evidence="1 2">Broad substrate specificity ATP-dependent transporter of the ATP-binding cassette (ABC) family that actively extrudes a wide variety of physiological compounds, dietary toxins and xenobiotics from cells. Involved in porphyrin homeostasis, mediating the export of protoporphyrin IX (PPIX) from both mitochondria to cytosol and cytosol to extracellular space, it also functions in the cellular export of heme. Also mediates the efflux of sphingosine-1-P from cells. Acts as a urate exporter functioning in both renal and extrarenal urate excretion (By similarity). In kidney, it also functions as a physiological exporter of the uremic toxin indoxyl sulfate (By similarity). Also involved in the excretion of steroids like estrone 3-sulfate/E1S, 3beta-sulfooxy-androst-5-en-17-one/DHEAS, and other sulfate conjugates (By similarity). Mediates the secretion of the riboflavin and biotin vitamins into milk. Extrudes pheophorbide a, a phototoxic porphyrin catabolite of chlorophyll, reducing its bioavailability (By similarity). Plays an important role in the exclusion of xenobiotics from the brain. It confers to cells a resistance to multiple drugs and other xenobiotics including mitoxantrone, pheophorbide, camptothecin, methotrexate, azidothymidine, and the anthracyclines daunorubicin and doxorubicin, through the control of their efflux (By similarity). In placenta, it limits the penetration of drugs from the maternal plasma into the fetus. May play a role in early stem cell self-renewal by blocking differentiation (By similarity). In inflammatory macrophages, exports itaconate from the cytosol to the extracellular compartment and limits the activation of TFEB-dependent lysosome biogenesis involved in antibacterial innate immune response.</text>
</comment>
<comment type="catalytic activity">
    <reaction evidence="2">
        <text>ATP + H2O + xenobioticSide 1 = ADP + phosphate + xenobioticSide 2.</text>
        <dbReference type="EC" id="7.6.2.2"/>
    </reaction>
</comment>
<comment type="catalytic activity">
    <reaction evidence="2">
        <text>urate(in) + ATP + H2O = urate(out) + ADP + phosphate + H(+)</text>
        <dbReference type="Rhea" id="RHEA:16461"/>
        <dbReference type="ChEBI" id="CHEBI:15377"/>
        <dbReference type="ChEBI" id="CHEBI:15378"/>
        <dbReference type="ChEBI" id="CHEBI:17775"/>
        <dbReference type="ChEBI" id="CHEBI:30616"/>
        <dbReference type="ChEBI" id="CHEBI:43474"/>
        <dbReference type="ChEBI" id="CHEBI:456216"/>
    </reaction>
    <physiologicalReaction direction="left-to-right" evidence="2">
        <dbReference type="Rhea" id="RHEA:16462"/>
    </physiologicalReaction>
</comment>
<comment type="catalytic activity">
    <reaction evidence="1">
        <text>indoxyl sulfate(in) + ATP + H2O = indoxyl sulfate(out) + ADP + phosphate + H(+)</text>
        <dbReference type="Rhea" id="RHEA:61332"/>
        <dbReference type="ChEBI" id="CHEBI:15377"/>
        <dbReference type="ChEBI" id="CHEBI:15378"/>
        <dbReference type="ChEBI" id="CHEBI:30616"/>
        <dbReference type="ChEBI" id="CHEBI:43474"/>
        <dbReference type="ChEBI" id="CHEBI:144643"/>
        <dbReference type="ChEBI" id="CHEBI:456216"/>
    </reaction>
    <physiologicalReaction direction="left-to-right" evidence="1">
        <dbReference type="Rhea" id="RHEA:61333"/>
    </physiologicalReaction>
</comment>
<comment type="catalytic activity">
    <reaction evidence="2">
        <text>sphing-4-enine 1-phosphate(in) + ATP + H2O = sphing-4-enine 1-phosphate(out) + ADP + phosphate + H(+)</text>
        <dbReference type="Rhea" id="RHEA:38951"/>
        <dbReference type="ChEBI" id="CHEBI:15377"/>
        <dbReference type="ChEBI" id="CHEBI:15378"/>
        <dbReference type="ChEBI" id="CHEBI:30616"/>
        <dbReference type="ChEBI" id="CHEBI:43474"/>
        <dbReference type="ChEBI" id="CHEBI:60119"/>
        <dbReference type="ChEBI" id="CHEBI:456216"/>
    </reaction>
    <physiologicalReaction direction="left-to-right" evidence="2">
        <dbReference type="Rhea" id="RHEA:38952"/>
    </physiologicalReaction>
</comment>
<comment type="catalytic activity">
    <reaction evidence="2">
        <text>estrone 3-sulfate(in) + ATP + H2O = estrone 3-sulfate(out) + ADP + phosphate + H(+)</text>
        <dbReference type="Rhea" id="RHEA:61348"/>
        <dbReference type="ChEBI" id="CHEBI:15377"/>
        <dbReference type="ChEBI" id="CHEBI:15378"/>
        <dbReference type="ChEBI" id="CHEBI:30616"/>
        <dbReference type="ChEBI" id="CHEBI:43474"/>
        <dbReference type="ChEBI" id="CHEBI:60050"/>
        <dbReference type="ChEBI" id="CHEBI:456216"/>
    </reaction>
    <physiologicalReaction direction="left-to-right" evidence="2">
        <dbReference type="Rhea" id="RHEA:61349"/>
    </physiologicalReaction>
</comment>
<comment type="catalytic activity">
    <reaction evidence="2">
        <text>dehydroepiandrosterone 3-sulfate(in) + ATP + H2O = dehydroepiandrosterone 3-sulfate(out) + ADP + phosphate + H(+)</text>
        <dbReference type="Rhea" id="RHEA:61364"/>
        <dbReference type="ChEBI" id="CHEBI:15377"/>
        <dbReference type="ChEBI" id="CHEBI:15378"/>
        <dbReference type="ChEBI" id="CHEBI:30616"/>
        <dbReference type="ChEBI" id="CHEBI:43474"/>
        <dbReference type="ChEBI" id="CHEBI:57905"/>
        <dbReference type="ChEBI" id="CHEBI:456216"/>
    </reaction>
    <physiologicalReaction direction="left-to-right" evidence="2">
        <dbReference type="Rhea" id="RHEA:61365"/>
    </physiologicalReaction>
</comment>
<comment type="catalytic activity">
    <reaction evidence="2">
        <text>4-methylumbelliferone sulfate(in) + ATP + H2O = 4-methylumbelliferone sulfate(out) + ADP + phosphate + H(+)</text>
        <dbReference type="Rhea" id="RHEA:61368"/>
        <dbReference type="ChEBI" id="CHEBI:15377"/>
        <dbReference type="ChEBI" id="CHEBI:15378"/>
        <dbReference type="ChEBI" id="CHEBI:30616"/>
        <dbReference type="ChEBI" id="CHEBI:43474"/>
        <dbReference type="ChEBI" id="CHEBI:144581"/>
        <dbReference type="ChEBI" id="CHEBI:456216"/>
    </reaction>
    <physiologicalReaction direction="left-to-right" evidence="2">
        <dbReference type="Rhea" id="RHEA:61369"/>
    </physiologicalReaction>
</comment>
<comment type="catalytic activity">
    <reaction evidence="2">
        <text>5,7-dimethyl-2-methylamino-4-(3-pyridylmethyl)-1,3-benzothiazol-6-yl beta-D-glucuronate(in) + ATP + H2O = 5,7-dimethyl-2-methylamino-4-(3-pyridylmethyl)-1,3-benzothiazol-6-yl beta-D-glucuronate(out) + ADP + phosphate + H(+)</text>
        <dbReference type="Rhea" id="RHEA:61384"/>
        <dbReference type="ChEBI" id="CHEBI:15377"/>
        <dbReference type="ChEBI" id="CHEBI:15378"/>
        <dbReference type="ChEBI" id="CHEBI:30616"/>
        <dbReference type="ChEBI" id="CHEBI:43474"/>
        <dbReference type="ChEBI" id="CHEBI:144584"/>
        <dbReference type="ChEBI" id="CHEBI:456216"/>
    </reaction>
    <physiologicalReaction direction="left-to-right" evidence="2">
        <dbReference type="Rhea" id="RHEA:61385"/>
    </physiologicalReaction>
</comment>
<comment type="catalytic activity">
    <reaction evidence="2">
        <text>4-methylumbelliferone beta-D-glucuronate(in) + ATP + H2O = 4-methylumbelliferone beta-D-glucuronate(out) + ADP + phosphate + H(+)</text>
        <dbReference type="Rhea" id="RHEA:61372"/>
        <dbReference type="ChEBI" id="CHEBI:15377"/>
        <dbReference type="ChEBI" id="CHEBI:15378"/>
        <dbReference type="ChEBI" id="CHEBI:30616"/>
        <dbReference type="ChEBI" id="CHEBI:43474"/>
        <dbReference type="ChEBI" id="CHEBI:144582"/>
        <dbReference type="ChEBI" id="CHEBI:456216"/>
    </reaction>
    <physiologicalReaction direction="left-to-right" evidence="2">
        <dbReference type="Rhea" id="RHEA:61373"/>
    </physiologicalReaction>
</comment>
<comment type="catalytic activity">
    <reaction evidence="2">
        <text>5,7-dimethyl-2-methylamino-4-(3-pyridylmethyl)-1,3-benzothiazol-6-yl sulfate(in) + ATP + H2O = 5,7-dimethyl-2-methylamino-4-(3-pyridylmethyl)-1,3-benzothiazol-6-yl sulfate(out) + ADP + phosphate + H(+)</text>
        <dbReference type="Rhea" id="RHEA:61376"/>
        <dbReference type="ChEBI" id="CHEBI:15377"/>
        <dbReference type="ChEBI" id="CHEBI:15378"/>
        <dbReference type="ChEBI" id="CHEBI:30616"/>
        <dbReference type="ChEBI" id="CHEBI:43474"/>
        <dbReference type="ChEBI" id="CHEBI:144583"/>
        <dbReference type="ChEBI" id="CHEBI:456216"/>
    </reaction>
    <physiologicalReaction direction="left-to-right" evidence="2">
        <dbReference type="Rhea" id="RHEA:61377"/>
    </physiologicalReaction>
</comment>
<comment type="catalytic activity">
    <reaction evidence="2">
        <text>17beta-estradiol 17-O-(beta-D-glucuronate)(in) + ATP + H2O = 17beta-estradiol 17-O-(beta-D-glucuronate)(out) + ADP + phosphate + H(+)</text>
        <dbReference type="Rhea" id="RHEA:60128"/>
        <dbReference type="ChEBI" id="CHEBI:15377"/>
        <dbReference type="ChEBI" id="CHEBI:15378"/>
        <dbReference type="ChEBI" id="CHEBI:30616"/>
        <dbReference type="ChEBI" id="CHEBI:43474"/>
        <dbReference type="ChEBI" id="CHEBI:82961"/>
        <dbReference type="ChEBI" id="CHEBI:456216"/>
    </reaction>
    <physiologicalReaction direction="left-to-right" evidence="2">
        <dbReference type="Rhea" id="RHEA:60129"/>
    </physiologicalReaction>
</comment>
<comment type="catalytic activity">
    <reaction evidence="2">
        <text>methotrexate(in) + ATP + H2O = methotrexate(out) + ADP + phosphate + H(+)</text>
        <dbReference type="Rhea" id="RHEA:61356"/>
        <dbReference type="ChEBI" id="CHEBI:15377"/>
        <dbReference type="ChEBI" id="CHEBI:15378"/>
        <dbReference type="ChEBI" id="CHEBI:30616"/>
        <dbReference type="ChEBI" id="CHEBI:43474"/>
        <dbReference type="ChEBI" id="CHEBI:50681"/>
        <dbReference type="ChEBI" id="CHEBI:456216"/>
    </reaction>
    <physiologicalReaction direction="left-to-right" evidence="2">
        <dbReference type="Rhea" id="RHEA:61357"/>
    </physiologicalReaction>
</comment>
<comment type="catalytic activity">
    <reaction evidence="1">
        <text>riboflavin(in) + ATP + H2O = riboflavin(out) + ADP + phosphate + H(+)</text>
        <dbReference type="Rhea" id="RHEA:61352"/>
        <dbReference type="ChEBI" id="CHEBI:15377"/>
        <dbReference type="ChEBI" id="CHEBI:15378"/>
        <dbReference type="ChEBI" id="CHEBI:30616"/>
        <dbReference type="ChEBI" id="CHEBI:43474"/>
        <dbReference type="ChEBI" id="CHEBI:57986"/>
        <dbReference type="ChEBI" id="CHEBI:456216"/>
    </reaction>
    <physiologicalReaction direction="left-to-right" evidence="1">
        <dbReference type="Rhea" id="RHEA:61353"/>
    </physiologicalReaction>
</comment>
<comment type="catalytic activity">
    <reaction evidence="1">
        <text>pheophorbide a(in) + ATP + H2O = pheophorbide a(out) + ADP + phosphate + H(+)</text>
        <dbReference type="Rhea" id="RHEA:61360"/>
        <dbReference type="ChEBI" id="CHEBI:15377"/>
        <dbReference type="ChEBI" id="CHEBI:15378"/>
        <dbReference type="ChEBI" id="CHEBI:30616"/>
        <dbReference type="ChEBI" id="CHEBI:43474"/>
        <dbReference type="ChEBI" id="CHEBI:58687"/>
        <dbReference type="ChEBI" id="CHEBI:456216"/>
    </reaction>
    <physiologicalReaction direction="left-to-right" evidence="1">
        <dbReference type="Rhea" id="RHEA:61361"/>
    </physiologicalReaction>
</comment>
<comment type="catalytic activity">
    <reaction evidence="1 2">
        <text>itaconate(in) + ATP + H2O = itaconate(out) + ADP + phosphate + H(+)</text>
        <dbReference type="Rhea" id="RHEA:82291"/>
        <dbReference type="ChEBI" id="CHEBI:15377"/>
        <dbReference type="ChEBI" id="CHEBI:15378"/>
        <dbReference type="ChEBI" id="CHEBI:17240"/>
        <dbReference type="ChEBI" id="CHEBI:30616"/>
        <dbReference type="ChEBI" id="CHEBI:43474"/>
        <dbReference type="ChEBI" id="CHEBI:456216"/>
    </reaction>
    <physiologicalReaction direction="left-to-right" evidence="1 2">
        <dbReference type="Rhea" id="RHEA:82292"/>
    </physiologicalReaction>
</comment>
<comment type="subunit">
    <text evidence="2">Homodimer; disulfide-linked. The minimal functional unit is a homodimer, but the major oligomeric form in plasma membrane is a homotetramer with possibility of higher order oligomerization up to homododecamers.</text>
</comment>
<comment type="subcellular location">
    <subcellularLocation>
        <location evidence="6">Cell membrane</location>
        <topology evidence="3">Multi-pass membrane protein</topology>
    </subcellularLocation>
    <subcellularLocation>
        <location evidence="7">Apical cell membrane</location>
        <topology evidence="3">Multi-pass membrane protein</topology>
    </subcellularLocation>
    <subcellularLocation>
        <location evidence="2">Mitochondrion membrane</location>
        <topology evidence="3">Multi-pass membrane protein</topology>
    </subcellularLocation>
</comment>
<comment type="tissue specificity">
    <text evidence="6 7">Highly expressed in brain capillary, kidney and small intestine. Lower expression in heart. Preferentially expressed (at protein level) on the luminal membrane of brain capillaries, in kidney and small intestine.</text>
</comment>
<comment type="induction">
    <text evidence="7">Down-regulated upon ischemia-reperfusion.</text>
</comment>
<comment type="domain">
    <text evidence="2">The extracellular loop 3 (ECL3) is involved in binding porphyrins and transfer them to other carriers, probably albumin.</text>
</comment>
<comment type="PTM">
    <text evidence="6">N-glycosylated in brain capillary, kidney and small intestine but not in heart.</text>
</comment>
<comment type="PTM">
    <text evidence="2">N-glycosylated. Glycosylation-deficient ABCG2 is normally expressed and functional.</text>
</comment>
<comment type="PTM">
    <text evidence="2">Phosphorylated. Phosphorylation may regulate the localization to the plasma membrane, the homooligomerization and therefore, the activity of the transporter.</text>
</comment>
<comment type="similarity">
    <text evidence="8">Belongs to the ABC transporter superfamily. ABCG family. Eye pigment precursor importer (TC 3.A.1.204) subfamily.</text>
</comment>
<feature type="chain" id="PRO_0000093390" description="Broad substrate specificity ATP-binding cassette transporter ABCG2">
    <location>
        <begin position="1"/>
        <end position="657"/>
    </location>
</feature>
<feature type="topological domain" description="Cytoplasmic" evidence="3">
    <location>
        <begin position="1"/>
        <end position="395"/>
    </location>
</feature>
<feature type="transmembrane region" description="Helical" evidence="3">
    <location>
        <begin position="396"/>
        <end position="416"/>
    </location>
</feature>
<feature type="topological domain" description="Extracellular" evidence="3">
    <location>
        <begin position="417"/>
        <end position="428"/>
    </location>
</feature>
<feature type="transmembrane region" description="Helical" evidence="3">
    <location>
        <begin position="429"/>
        <end position="449"/>
    </location>
</feature>
<feature type="topological domain" description="Cytoplasmic" evidence="3">
    <location>
        <begin position="450"/>
        <end position="477"/>
    </location>
</feature>
<feature type="transmembrane region" description="Helical" evidence="3">
    <location>
        <begin position="478"/>
        <end position="498"/>
    </location>
</feature>
<feature type="topological domain" description="Extracellular" evidence="3">
    <location>
        <begin position="499"/>
        <end position="506"/>
    </location>
</feature>
<feature type="transmembrane region" description="Helical" evidence="3">
    <location>
        <begin position="507"/>
        <end position="527"/>
    </location>
</feature>
<feature type="topological domain" description="Cytoplasmic" evidence="3">
    <location>
        <begin position="528"/>
        <end position="535"/>
    </location>
</feature>
<feature type="transmembrane region" description="Helical" evidence="3">
    <location>
        <begin position="536"/>
        <end position="556"/>
    </location>
</feature>
<feature type="topological domain" description="Extracellular" evidence="3">
    <location>
        <begin position="557"/>
        <end position="632"/>
    </location>
</feature>
<feature type="transmembrane region" description="Helical" evidence="3">
    <location>
        <begin position="633"/>
        <end position="653"/>
    </location>
</feature>
<feature type="topological domain" description="Cytoplasmic" evidence="3">
    <location>
        <begin position="654"/>
        <end position="657"/>
    </location>
</feature>
<feature type="domain" description="ABC transporter" evidence="4">
    <location>
        <begin position="48"/>
        <end position="285"/>
    </location>
</feature>
<feature type="domain" description="ABC transmembrane type-2">
    <location>
        <begin position="389"/>
        <end position="653"/>
    </location>
</feature>
<feature type="region of interest" description="Disordered" evidence="5">
    <location>
        <begin position="1"/>
        <end position="25"/>
    </location>
</feature>
<feature type="binding site" evidence="4">
    <location>
        <begin position="79"/>
        <end position="86"/>
    </location>
    <ligand>
        <name>ATP</name>
        <dbReference type="ChEBI" id="CHEBI:30616"/>
    </ligand>
</feature>
<feature type="binding site" evidence="2">
    <location>
        <begin position="183"/>
        <end position="189"/>
    </location>
    <ligand>
        <name>ATP</name>
        <dbReference type="ChEBI" id="CHEBI:30616"/>
    </ligand>
</feature>
<feature type="binding site" evidence="2">
    <location>
        <position position="210"/>
    </location>
    <ligand>
        <name>ATP</name>
        <dbReference type="ChEBI" id="CHEBI:30616"/>
    </ligand>
</feature>
<feature type="binding site" evidence="2">
    <location>
        <position position="242"/>
    </location>
    <ligand>
        <name>ATP</name>
        <dbReference type="ChEBI" id="CHEBI:30616"/>
    </ligand>
</feature>
<feature type="glycosylation site" description="N-linked (GlcNAc...) asparagine" evidence="3">
    <location>
        <position position="596"/>
    </location>
</feature>
<feature type="glycosylation site" description="N-linked (GlcNAc...) asparagine" evidence="3">
    <location>
        <position position="600"/>
    </location>
</feature>
<feature type="disulfide bond" evidence="2">
    <location>
        <begin position="592"/>
        <end position="610"/>
    </location>
</feature>
<feature type="disulfide bond" description="Interchain" evidence="2">
    <location>
        <position position="603"/>
    </location>
</feature>
<feature type="sequence conflict" description="In Ref. 1; BAC75666." evidence="8" ref="1">
    <original>AFR</original>
    <variation>PFK</variation>
    <location>
        <begin position="363"/>
        <end position="365"/>
    </location>
</feature>
<feature type="sequence conflict" description="In Ref. 1; BAC75666." evidence="8" ref="1">
    <original>F</original>
    <variation>L</variation>
    <location>
        <position position="431"/>
    </location>
</feature>
<feature type="sequence conflict" description="In Ref. 3; AAM09106/AAM09107/AAM09108." evidence="8" ref="3">
    <original>I</original>
    <variation>L</variation>
    <location>
        <position position="492"/>
    </location>
</feature>
<feature type="sequence conflict" description="In Ref. 1; BAC75666." evidence="8" ref="1">
    <original>T</original>
    <variation>L</variation>
    <location>
        <position position="502"/>
    </location>
</feature>
<feature type="sequence conflict" description="In Ref. 1; BAC75666." evidence="8" ref="1">
    <original>M</original>
    <variation>R</variation>
    <location>
        <position position="510"/>
    </location>
</feature>
<proteinExistence type="evidence at protein level"/>
<sequence>MSSSNDHVLVPMSQRNKNGLPGMSSRGARTLAEGDVLSFHHITYRVKVKSGFLVRKTAEKEILSDINGIMKPGLNAILGPTGGGKSSLLDVLAARKDPRGLSGDVLINGAPQPANFKCSSGYVVQDDVVMGTLTVRENLQFSAALRLPKAMKTHEKNERINTIIKELGLDKVADSKVGTQFTRGISGGERKRTSIGMELITDPSILFLDEPTTGLDSSTANAVLLLLKRMSKQGRTIIFSIHQPRYSIFKLFDSLTLLASGKLMFHGPAQKALEYFASAGYHCEPYNNPADFFLDVINGDSSAVMLNRGEQDHEANKTEEPSKREKPIIENLAEFYINSTIYGETKAELDQLPVAQKKKGSSAFREPVYVTSFCHQLRWIARRSFKNLLGNPQASVAQLIVTVILGLIIGALYFGLKNDPTGMQNRAGVFFFLTTNQCFTSVSAVELFVVEKKLFIHEYISGYYRVSSYFFGKLVSDLLPMRFLPSVIYTCILYFMLGLKRTVEAFFIMMFTLIMVAYTASSMALAIAAGQSVVSVATLLMTISFVFMMLFSGLLVNLRTIGPWLSWLQYFSIPRYGFTALQHNEFLGQEFCPGLNVTMNSTCVNSYTICTGNDYLINQGIDLSPWGLWRNHVALACMIIIFLTIAYLKLLFLKKYS</sequence>
<gene>
    <name type="primary">Abcg2</name>
    <name type="synonym">Bcrp1</name>
</gene>